<gene>
    <name evidence="1" type="primary">valS</name>
    <name type="ordered locus">MTH_767</name>
</gene>
<accession>O26861</accession>
<name>SYV_METTH</name>
<evidence type="ECO:0000255" key="1">
    <source>
        <dbReference type="HAMAP-Rule" id="MF_02005"/>
    </source>
</evidence>
<keyword id="KW-0030">Aminoacyl-tRNA synthetase</keyword>
<keyword id="KW-0067">ATP-binding</keyword>
<keyword id="KW-0963">Cytoplasm</keyword>
<keyword id="KW-0436">Ligase</keyword>
<keyword id="KW-0547">Nucleotide-binding</keyword>
<keyword id="KW-0648">Protein biosynthesis</keyword>
<keyword id="KW-1185">Reference proteome</keyword>
<reference key="1">
    <citation type="journal article" date="1997" name="J. Bacteriol.">
        <title>Complete genome sequence of Methanobacterium thermoautotrophicum deltaH: functional analysis and comparative genomics.</title>
        <authorList>
            <person name="Smith D.R."/>
            <person name="Doucette-Stamm L.A."/>
            <person name="Deloughery C."/>
            <person name="Lee H.-M."/>
            <person name="Dubois J."/>
            <person name="Aldredge T."/>
            <person name="Bashirzadeh R."/>
            <person name="Blakely D."/>
            <person name="Cook R."/>
            <person name="Gilbert K."/>
            <person name="Harrison D."/>
            <person name="Hoang L."/>
            <person name="Keagle P."/>
            <person name="Lumm W."/>
            <person name="Pothier B."/>
            <person name="Qiu D."/>
            <person name="Spadafora R."/>
            <person name="Vicare R."/>
            <person name="Wang Y."/>
            <person name="Wierzbowski J."/>
            <person name="Gibson R."/>
            <person name="Jiwani N."/>
            <person name="Caruso A."/>
            <person name="Bush D."/>
            <person name="Safer H."/>
            <person name="Patwell D."/>
            <person name="Prabhakar S."/>
            <person name="McDougall S."/>
            <person name="Shimer G."/>
            <person name="Goyal A."/>
            <person name="Pietrovski S."/>
            <person name="Church G.M."/>
            <person name="Daniels C.J."/>
            <person name="Mao J.-I."/>
            <person name="Rice P."/>
            <person name="Noelling J."/>
            <person name="Reeve J.N."/>
        </authorList>
    </citation>
    <scope>NUCLEOTIDE SEQUENCE [LARGE SCALE GENOMIC DNA]</scope>
    <source>
        <strain>ATCC 29096 / DSM 1053 / JCM 10044 / NBRC 100330 / Delta H</strain>
    </source>
</reference>
<organism>
    <name type="scientific">Methanothermobacter thermautotrophicus (strain ATCC 29096 / DSM 1053 / JCM 10044 / NBRC 100330 / Delta H)</name>
    <name type="common">Methanobacterium thermoautotrophicum</name>
    <dbReference type="NCBI Taxonomy" id="187420"/>
    <lineage>
        <taxon>Archaea</taxon>
        <taxon>Methanobacteriati</taxon>
        <taxon>Methanobacteriota</taxon>
        <taxon>Methanomada group</taxon>
        <taxon>Methanobacteria</taxon>
        <taxon>Methanobacteriales</taxon>
        <taxon>Methanobacteriaceae</taxon>
        <taxon>Methanothermobacter</taxon>
    </lineage>
</organism>
<sequence>MTDNQIPKDYNHKNEVKWQKKWQEEDIYRFIGSGTKPRYIIDTPPPYPTGSIHMGHVLNWVYMDIIARFKRMRGFDVLFPQGWDCHGLPTEVKVEETHNIKKSDVSREEFRRLCVELTQENIRMMKEQMQRLGFSQDWNHEFVTMTPEYMRRTQLSFLRMYRDGLIYQGVHPVNWCPRCETAIAFAEVEYIENETNLNYVRFPVEGADEHITIATTRPELMAACVAVVVHPDDERFREFEDKLIEVPLFGQKVKLIKDPEVDPEFGTGAVMVCTFGDKTDVSWVNRHGLDVIDAIDERGYMTEAAGKYQGLTIAECKEKIVEDLENEGFLLKKEPVRQNVGTCWRCKTPIEILVKKQWFVAVKKLIPQVREAAEEMKWVPGHMKTRLLNWTGSMDWDWCISRQRIFATPIPVWYCSECGRVHVADEEMLPVDPTRDGPGITCECGSTEFIGEEDVLDTWMDSSISPLSVAGWPDESYRELFPADLRPQGHDIIRTWAFYTILRCMALTGEKPFSEIVINGMVFGEDGHKMSKSRGNVIAPEEVLEDYGADALRLWAAGSVPGSDVPFAWKDVKYGYKFLRKFWNAFRFISIHLTENPEVEARPMDRWILSRLMNLVAEVTESLDDYNFAAAVNRVQTFIWHDFCDEYIEAVKYRLYSDEDPESRMAAQNTLRMVLDTCLRLLAPVAPHFTEEVHQHVGEGSIHLRGWPEHIPEIVDPEIERSGDLAVEIIGEIRRFKSSSKMPLNAPLKAATIYTDNESAEMIKPFLDDIAGTMNIGDISLVAGKPEITERAVELEPRMEKIGPEFRSDAPAIISWLTGADPHEVYEEIQRNGEIEVEGNRLTMDHISFRKEVIGTAGERVDVLNLDEPEVIIEIVR</sequence>
<comment type="function">
    <text evidence="1">Catalyzes the attachment of valine to tRNA(Val). As ValRS can inadvertently accommodate and process structurally similar amino acids such as threonine, to avoid such errors, it has a 'posttransfer' editing activity that hydrolyzes mischarged Thr-tRNA(Val) in a tRNA-dependent manner.</text>
</comment>
<comment type="catalytic activity">
    <reaction evidence="1">
        <text>tRNA(Val) + L-valine + ATP = L-valyl-tRNA(Val) + AMP + diphosphate</text>
        <dbReference type="Rhea" id="RHEA:10704"/>
        <dbReference type="Rhea" id="RHEA-COMP:9672"/>
        <dbReference type="Rhea" id="RHEA-COMP:9708"/>
        <dbReference type="ChEBI" id="CHEBI:30616"/>
        <dbReference type="ChEBI" id="CHEBI:33019"/>
        <dbReference type="ChEBI" id="CHEBI:57762"/>
        <dbReference type="ChEBI" id="CHEBI:78442"/>
        <dbReference type="ChEBI" id="CHEBI:78537"/>
        <dbReference type="ChEBI" id="CHEBI:456215"/>
        <dbReference type="EC" id="6.1.1.9"/>
    </reaction>
</comment>
<comment type="subcellular location">
    <subcellularLocation>
        <location evidence="1">Cytoplasm</location>
    </subcellularLocation>
</comment>
<comment type="domain">
    <text evidence="1">ValRS has two distinct active sites: one for aminoacylation and one for editing. The misactivated threonine is translocated from the active site to the editing site.</text>
</comment>
<comment type="similarity">
    <text evidence="1">Belongs to the class-I aminoacyl-tRNA synthetase family. ValS type 2 subfamily.</text>
</comment>
<feature type="chain" id="PRO_0000106250" description="Valine--tRNA ligase">
    <location>
        <begin position="1"/>
        <end position="877"/>
    </location>
</feature>
<feature type="short sequence motif" description="'HIGH' region">
    <location>
        <begin position="46"/>
        <end position="56"/>
    </location>
</feature>
<feature type="short sequence motif" description="'KMSKS' region">
    <location>
        <begin position="529"/>
        <end position="533"/>
    </location>
</feature>
<feature type="binding site" evidence="1">
    <location>
        <position position="532"/>
    </location>
    <ligand>
        <name>ATP</name>
        <dbReference type="ChEBI" id="CHEBI:30616"/>
    </ligand>
</feature>
<dbReference type="EC" id="6.1.1.9" evidence="1"/>
<dbReference type="EMBL" id="AE000666">
    <property type="protein sequence ID" value="AAB85270.1"/>
    <property type="molecule type" value="Genomic_DNA"/>
</dbReference>
<dbReference type="PIR" id="E69202">
    <property type="entry name" value="E69202"/>
</dbReference>
<dbReference type="RefSeq" id="WP_048060895.1">
    <property type="nucleotide sequence ID" value="NC_000916.1"/>
</dbReference>
<dbReference type="SMR" id="O26861"/>
<dbReference type="FunCoup" id="O26861">
    <property type="interactions" value="147"/>
</dbReference>
<dbReference type="STRING" id="187420.MTH_767"/>
<dbReference type="PaxDb" id="187420-MTH_767"/>
<dbReference type="EnsemblBacteria" id="AAB85270">
    <property type="protein sequence ID" value="AAB85270"/>
    <property type="gene ID" value="MTH_767"/>
</dbReference>
<dbReference type="GeneID" id="82297219"/>
<dbReference type="KEGG" id="mth:MTH_767"/>
<dbReference type="PATRIC" id="fig|187420.15.peg.755"/>
<dbReference type="HOGENOM" id="CLU_001493_0_2_2"/>
<dbReference type="InParanoid" id="O26861"/>
<dbReference type="Proteomes" id="UP000005223">
    <property type="component" value="Chromosome"/>
</dbReference>
<dbReference type="GO" id="GO:0005829">
    <property type="term" value="C:cytosol"/>
    <property type="evidence" value="ECO:0007669"/>
    <property type="project" value="TreeGrafter"/>
</dbReference>
<dbReference type="GO" id="GO:0002161">
    <property type="term" value="F:aminoacyl-tRNA deacylase activity"/>
    <property type="evidence" value="ECO:0007669"/>
    <property type="project" value="InterPro"/>
</dbReference>
<dbReference type="GO" id="GO:0005524">
    <property type="term" value="F:ATP binding"/>
    <property type="evidence" value="ECO:0007669"/>
    <property type="project" value="UniProtKB-UniRule"/>
</dbReference>
<dbReference type="GO" id="GO:0004832">
    <property type="term" value="F:valine-tRNA ligase activity"/>
    <property type="evidence" value="ECO:0007669"/>
    <property type="project" value="UniProtKB-UniRule"/>
</dbReference>
<dbReference type="GO" id="GO:0006438">
    <property type="term" value="P:valyl-tRNA aminoacylation"/>
    <property type="evidence" value="ECO:0007669"/>
    <property type="project" value="UniProtKB-UniRule"/>
</dbReference>
<dbReference type="CDD" id="cd07962">
    <property type="entry name" value="Anticodon_Ia_Val"/>
    <property type="match status" value="1"/>
</dbReference>
<dbReference type="CDD" id="cd00817">
    <property type="entry name" value="ValRS_core"/>
    <property type="match status" value="1"/>
</dbReference>
<dbReference type="FunFam" id="1.10.730.10:FF:000033">
    <property type="entry name" value="Valine--tRNA ligase"/>
    <property type="match status" value="1"/>
</dbReference>
<dbReference type="FunFam" id="3.40.50.620:FF:000192">
    <property type="entry name" value="Valine--tRNA ligase"/>
    <property type="match status" value="1"/>
</dbReference>
<dbReference type="Gene3D" id="3.40.50.620">
    <property type="entry name" value="HUPs"/>
    <property type="match status" value="2"/>
</dbReference>
<dbReference type="Gene3D" id="1.10.730.10">
    <property type="entry name" value="Isoleucyl-tRNA Synthetase, Domain 1"/>
    <property type="match status" value="1"/>
</dbReference>
<dbReference type="HAMAP" id="MF_02005">
    <property type="entry name" value="Val_tRNA_synth_type2"/>
    <property type="match status" value="1"/>
</dbReference>
<dbReference type="InterPro" id="IPR001412">
    <property type="entry name" value="aa-tRNA-synth_I_CS"/>
</dbReference>
<dbReference type="InterPro" id="IPR002300">
    <property type="entry name" value="aa-tRNA-synth_Ia"/>
</dbReference>
<dbReference type="InterPro" id="IPR033705">
    <property type="entry name" value="Anticodon_Ia_Val"/>
</dbReference>
<dbReference type="InterPro" id="IPR013155">
    <property type="entry name" value="M/V/L/I-tRNA-synth_anticd-bd"/>
</dbReference>
<dbReference type="InterPro" id="IPR014729">
    <property type="entry name" value="Rossmann-like_a/b/a_fold"/>
</dbReference>
<dbReference type="InterPro" id="IPR009080">
    <property type="entry name" value="tRNAsynth_Ia_anticodon-bd"/>
</dbReference>
<dbReference type="InterPro" id="IPR009008">
    <property type="entry name" value="Val/Leu/Ile-tRNA-synth_edit"/>
</dbReference>
<dbReference type="InterPro" id="IPR022874">
    <property type="entry name" value="Valine-tRNA_ligase_type_2"/>
</dbReference>
<dbReference type="InterPro" id="IPR002303">
    <property type="entry name" value="Valyl-tRNA_ligase"/>
</dbReference>
<dbReference type="NCBIfam" id="NF009687">
    <property type="entry name" value="PRK13208.1"/>
    <property type="match status" value="1"/>
</dbReference>
<dbReference type="NCBIfam" id="TIGR00422">
    <property type="entry name" value="valS"/>
    <property type="match status" value="1"/>
</dbReference>
<dbReference type="PANTHER" id="PTHR11946:SF93">
    <property type="entry name" value="VALINE--TRNA LIGASE, CHLOROPLASTIC_MITOCHONDRIAL 2"/>
    <property type="match status" value="1"/>
</dbReference>
<dbReference type="PANTHER" id="PTHR11946">
    <property type="entry name" value="VALYL-TRNA SYNTHETASES"/>
    <property type="match status" value="1"/>
</dbReference>
<dbReference type="Pfam" id="PF08264">
    <property type="entry name" value="Anticodon_1"/>
    <property type="match status" value="1"/>
</dbReference>
<dbReference type="Pfam" id="PF00133">
    <property type="entry name" value="tRNA-synt_1"/>
    <property type="match status" value="1"/>
</dbReference>
<dbReference type="PRINTS" id="PR00986">
    <property type="entry name" value="TRNASYNTHVAL"/>
</dbReference>
<dbReference type="SUPFAM" id="SSF47323">
    <property type="entry name" value="Anticodon-binding domain of a subclass of class I aminoacyl-tRNA synthetases"/>
    <property type="match status" value="1"/>
</dbReference>
<dbReference type="SUPFAM" id="SSF52374">
    <property type="entry name" value="Nucleotidylyl transferase"/>
    <property type="match status" value="1"/>
</dbReference>
<dbReference type="SUPFAM" id="SSF50677">
    <property type="entry name" value="ValRS/IleRS/LeuRS editing domain"/>
    <property type="match status" value="1"/>
</dbReference>
<dbReference type="PROSITE" id="PS00178">
    <property type="entry name" value="AA_TRNA_LIGASE_I"/>
    <property type="match status" value="1"/>
</dbReference>
<protein>
    <recommendedName>
        <fullName evidence="1">Valine--tRNA ligase</fullName>
        <ecNumber evidence="1">6.1.1.9</ecNumber>
    </recommendedName>
    <alternativeName>
        <fullName evidence="1">Valyl-tRNA synthetase</fullName>
        <shortName evidence="1">ValRS</shortName>
    </alternativeName>
</protein>
<proteinExistence type="inferred from homology"/>